<reference key="1">
    <citation type="journal article" date="2007" name="Genome Res.">
        <title>Reductive evolution and niche adaptation inferred from the genome of Mycobacterium ulcerans, the causative agent of Buruli ulcer.</title>
        <authorList>
            <person name="Stinear T.P."/>
            <person name="Seemann T."/>
            <person name="Pidot S."/>
            <person name="Frigui W."/>
            <person name="Reysset G."/>
            <person name="Garnier T."/>
            <person name="Meurice G."/>
            <person name="Simon D."/>
            <person name="Bouchier C."/>
            <person name="Ma L."/>
            <person name="Tichit M."/>
            <person name="Porter J.L."/>
            <person name="Ryan J."/>
            <person name="Johnson P.D.R."/>
            <person name="Davies J.K."/>
            <person name="Jenkin G.A."/>
            <person name="Small P.L.C."/>
            <person name="Jones L.M."/>
            <person name="Tekaia F."/>
            <person name="Laval F."/>
            <person name="Daffe M."/>
            <person name="Parkhill J."/>
            <person name="Cole S.T."/>
        </authorList>
    </citation>
    <scope>NUCLEOTIDE SEQUENCE [LARGE SCALE GENOMIC DNA]</scope>
    <source>
        <strain>Agy99</strain>
    </source>
</reference>
<evidence type="ECO:0000255" key="1">
    <source>
        <dbReference type="HAMAP-Rule" id="MF_00185"/>
    </source>
</evidence>
<sequence>MRPLAIIGPTGSGKSQLALDVAERLAGEVPAEIVNADAMQLYRGMDIGTAKLSVAARRGIPHHQLDVLNVAETATVARYQQAAAADIEAIIARGHVPIVVGGSMLHVQSLLDNWSFPATDPAVRARWEECLAELGVGELHAELARRDPAAAATILPTDGRRIVRALEVIELTGQPFAASAPRIGAAQWGTAIIGLDCDTPILDDRLAVRTDSMFERGLVEEVRVLLRAGLRDGVTAARALGYAQVLAALDAGGGAELLDDAREQTYFGTRRYVRRQRSWFRRDHRVHWCDAGATGPSDRVAMVDEALRVWRHVT</sequence>
<keyword id="KW-0067">ATP-binding</keyword>
<keyword id="KW-0460">Magnesium</keyword>
<keyword id="KW-0547">Nucleotide-binding</keyword>
<keyword id="KW-0808">Transferase</keyword>
<keyword id="KW-0819">tRNA processing</keyword>
<protein>
    <recommendedName>
        <fullName evidence="1">tRNA dimethylallyltransferase 1</fullName>
        <ecNumber evidence="1">2.5.1.75</ecNumber>
    </recommendedName>
    <alternativeName>
        <fullName evidence="1">Dimethylallyl diphosphate:tRNA dimethylallyltransferase 1</fullName>
        <shortName evidence="1">DMAPP:tRNA dimethylallyltransferase 1</shortName>
        <shortName evidence="1">DMATase 1</shortName>
    </alternativeName>
    <alternativeName>
        <fullName evidence="1">Isopentenyl-diphosphate:tRNA isopentenyltransferase 1</fullName>
        <shortName evidence="1">IPP transferase 1</shortName>
        <shortName evidence="1">IPPT 1</shortName>
        <shortName evidence="1">IPTase 1</shortName>
    </alternativeName>
</protein>
<accession>A0PT81</accession>
<organism>
    <name type="scientific">Mycobacterium ulcerans (strain Agy99)</name>
    <dbReference type="NCBI Taxonomy" id="362242"/>
    <lineage>
        <taxon>Bacteria</taxon>
        <taxon>Bacillati</taxon>
        <taxon>Actinomycetota</taxon>
        <taxon>Actinomycetes</taxon>
        <taxon>Mycobacteriales</taxon>
        <taxon>Mycobacteriaceae</taxon>
        <taxon>Mycobacterium</taxon>
        <taxon>Mycobacterium ulcerans group</taxon>
    </lineage>
</organism>
<feature type="chain" id="PRO_0000377232" description="tRNA dimethylallyltransferase 1">
    <location>
        <begin position="1"/>
        <end position="314"/>
    </location>
</feature>
<feature type="binding site" evidence="1">
    <location>
        <begin position="8"/>
        <end position="15"/>
    </location>
    <ligand>
        <name>ATP</name>
        <dbReference type="ChEBI" id="CHEBI:30616"/>
    </ligand>
</feature>
<feature type="binding site" evidence="1">
    <location>
        <begin position="10"/>
        <end position="15"/>
    </location>
    <ligand>
        <name>substrate</name>
    </ligand>
</feature>
<feature type="site" description="Interaction with substrate tRNA" evidence="1">
    <location>
        <position position="103"/>
    </location>
</feature>
<feature type="site" description="Interaction with substrate tRNA" evidence="1">
    <location>
        <position position="124"/>
    </location>
</feature>
<dbReference type="EC" id="2.5.1.75" evidence="1"/>
<dbReference type="EMBL" id="CP000325">
    <property type="protein sequence ID" value="ABL05550.1"/>
    <property type="molecule type" value="Genomic_DNA"/>
</dbReference>
<dbReference type="RefSeq" id="WP_011741158.1">
    <property type="nucleotide sequence ID" value="NC_008611.1"/>
</dbReference>
<dbReference type="SMR" id="A0PT81"/>
<dbReference type="KEGG" id="mul:MUL_3370"/>
<dbReference type="eggNOG" id="COG0324">
    <property type="taxonomic scope" value="Bacteria"/>
</dbReference>
<dbReference type="HOGENOM" id="CLU_032616_0_1_11"/>
<dbReference type="Proteomes" id="UP000000765">
    <property type="component" value="Chromosome"/>
</dbReference>
<dbReference type="GO" id="GO:0005524">
    <property type="term" value="F:ATP binding"/>
    <property type="evidence" value="ECO:0007669"/>
    <property type="project" value="UniProtKB-UniRule"/>
</dbReference>
<dbReference type="GO" id="GO:0052381">
    <property type="term" value="F:tRNA dimethylallyltransferase activity"/>
    <property type="evidence" value="ECO:0007669"/>
    <property type="project" value="UniProtKB-UniRule"/>
</dbReference>
<dbReference type="GO" id="GO:0006400">
    <property type="term" value="P:tRNA modification"/>
    <property type="evidence" value="ECO:0007669"/>
    <property type="project" value="TreeGrafter"/>
</dbReference>
<dbReference type="FunFam" id="1.10.20.140:FF:000001">
    <property type="entry name" value="tRNA dimethylallyltransferase"/>
    <property type="match status" value="1"/>
</dbReference>
<dbReference type="Gene3D" id="1.10.20.140">
    <property type="match status" value="1"/>
</dbReference>
<dbReference type="Gene3D" id="3.40.50.300">
    <property type="entry name" value="P-loop containing nucleotide triphosphate hydrolases"/>
    <property type="match status" value="1"/>
</dbReference>
<dbReference type="HAMAP" id="MF_00185">
    <property type="entry name" value="IPP_trans"/>
    <property type="match status" value="1"/>
</dbReference>
<dbReference type="InterPro" id="IPR039657">
    <property type="entry name" value="Dimethylallyltransferase"/>
</dbReference>
<dbReference type="InterPro" id="IPR018022">
    <property type="entry name" value="IPT"/>
</dbReference>
<dbReference type="InterPro" id="IPR027417">
    <property type="entry name" value="P-loop_NTPase"/>
</dbReference>
<dbReference type="NCBIfam" id="TIGR00174">
    <property type="entry name" value="miaA"/>
    <property type="match status" value="1"/>
</dbReference>
<dbReference type="PANTHER" id="PTHR11088">
    <property type="entry name" value="TRNA DIMETHYLALLYLTRANSFERASE"/>
    <property type="match status" value="1"/>
</dbReference>
<dbReference type="PANTHER" id="PTHR11088:SF60">
    <property type="entry name" value="TRNA DIMETHYLALLYLTRANSFERASE"/>
    <property type="match status" value="1"/>
</dbReference>
<dbReference type="Pfam" id="PF01715">
    <property type="entry name" value="IPPT"/>
    <property type="match status" value="1"/>
</dbReference>
<dbReference type="SUPFAM" id="SSF52540">
    <property type="entry name" value="P-loop containing nucleoside triphosphate hydrolases"/>
    <property type="match status" value="1"/>
</dbReference>
<proteinExistence type="inferred from homology"/>
<comment type="function">
    <text evidence="1">Catalyzes the transfer of a dimethylallyl group onto the adenine at position 37 in tRNAs that read codons beginning with uridine, leading to the formation of N6-(dimethylallyl)adenosine (i(6)A).</text>
</comment>
<comment type="catalytic activity">
    <reaction evidence="1">
        <text>adenosine(37) in tRNA + dimethylallyl diphosphate = N(6)-dimethylallyladenosine(37) in tRNA + diphosphate</text>
        <dbReference type="Rhea" id="RHEA:26482"/>
        <dbReference type="Rhea" id="RHEA-COMP:10162"/>
        <dbReference type="Rhea" id="RHEA-COMP:10375"/>
        <dbReference type="ChEBI" id="CHEBI:33019"/>
        <dbReference type="ChEBI" id="CHEBI:57623"/>
        <dbReference type="ChEBI" id="CHEBI:74411"/>
        <dbReference type="ChEBI" id="CHEBI:74415"/>
        <dbReference type="EC" id="2.5.1.75"/>
    </reaction>
</comment>
<comment type="cofactor">
    <cofactor evidence="1">
        <name>Mg(2+)</name>
        <dbReference type="ChEBI" id="CHEBI:18420"/>
    </cofactor>
</comment>
<comment type="subunit">
    <text evidence="1">Monomer.</text>
</comment>
<comment type="similarity">
    <text evidence="1">Belongs to the IPP transferase family.</text>
</comment>
<gene>
    <name evidence="1" type="primary">miaA1</name>
    <name type="ordered locus">MUL_3370</name>
</gene>
<name>MIAA1_MYCUA</name>